<dbReference type="EC" id="3.1.-.-"/>
<dbReference type="EMBL" id="Z74822">
    <property type="protein sequence ID" value="CAA99090.1"/>
    <property type="molecule type" value="Genomic_DNA"/>
</dbReference>
<dbReference type="EMBL" id="BK006948">
    <property type="protein sequence ID" value="DAA10704.1"/>
    <property type="molecule type" value="Genomic_DNA"/>
</dbReference>
<dbReference type="PIR" id="S66773">
    <property type="entry name" value="S66773"/>
</dbReference>
<dbReference type="RefSeq" id="NP_014561.1">
    <property type="nucleotide sequence ID" value="NM_001183334.1"/>
</dbReference>
<dbReference type="SMR" id="Q08237"/>
<dbReference type="BioGRID" id="34322">
    <property type="interactions" value="100"/>
</dbReference>
<dbReference type="DIP" id="DIP-5458N"/>
<dbReference type="FunCoup" id="Q08237">
    <property type="interactions" value="935"/>
</dbReference>
<dbReference type="IntAct" id="Q08237">
    <property type="interactions" value="28"/>
</dbReference>
<dbReference type="STRING" id="4932.YOL080C"/>
<dbReference type="iPTMnet" id="Q08237"/>
<dbReference type="PaxDb" id="4932-YOL080C"/>
<dbReference type="PeptideAtlas" id="Q08237"/>
<dbReference type="EnsemblFungi" id="YOL080C_mRNA">
    <property type="protein sequence ID" value="YOL080C"/>
    <property type="gene ID" value="YOL080C"/>
</dbReference>
<dbReference type="GeneID" id="854075"/>
<dbReference type="KEGG" id="sce:YOL080C"/>
<dbReference type="AGR" id="SGD:S000005440"/>
<dbReference type="SGD" id="S000005440">
    <property type="gene designation" value="REX4"/>
</dbReference>
<dbReference type="VEuPathDB" id="FungiDB:YOL080C"/>
<dbReference type="eggNOG" id="KOG2249">
    <property type="taxonomic scope" value="Eukaryota"/>
</dbReference>
<dbReference type="GeneTree" id="ENSGT00940000159607"/>
<dbReference type="HOGENOM" id="CLU_022453_2_0_1"/>
<dbReference type="InParanoid" id="Q08237"/>
<dbReference type="OMA" id="TMLIYKS"/>
<dbReference type="OrthoDB" id="8191639at2759"/>
<dbReference type="BioCyc" id="YEAST:G3O-33483-MONOMER"/>
<dbReference type="BioGRID-ORCS" id="854075">
    <property type="hits" value="0 hits in 10 CRISPR screens"/>
</dbReference>
<dbReference type="CD-CODE" id="BDAE0F88">
    <property type="entry name" value="Nucleolus"/>
</dbReference>
<dbReference type="PRO" id="PR:Q08237"/>
<dbReference type="Proteomes" id="UP000002311">
    <property type="component" value="Chromosome XV"/>
</dbReference>
<dbReference type="RNAct" id="Q08237">
    <property type="molecule type" value="protein"/>
</dbReference>
<dbReference type="GO" id="GO:0005730">
    <property type="term" value="C:nucleolus"/>
    <property type="evidence" value="ECO:0007005"/>
    <property type="project" value="SGD"/>
</dbReference>
<dbReference type="GO" id="GO:0005634">
    <property type="term" value="C:nucleus"/>
    <property type="evidence" value="ECO:0007005"/>
    <property type="project" value="SGD"/>
</dbReference>
<dbReference type="GO" id="GO:0008408">
    <property type="term" value="F:3'-5' exonuclease activity"/>
    <property type="evidence" value="ECO:0000250"/>
    <property type="project" value="SGD"/>
</dbReference>
<dbReference type="GO" id="GO:0004527">
    <property type="term" value="F:exonuclease activity"/>
    <property type="evidence" value="ECO:0000318"/>
    <property type="project" value="GO_Central"/>
</dbReference>
<dbReference type="GO" id="GO:0003676">
    <property type="term" value="F:nucleic acid binding"/>
    <property type="evidence" value="ECO:0007669"/>
    <property type="project" value="InterPro"/>
</dbReference>
<dbReference type="GO" id="GO:0000027">
    <property type="term" value="P:ribosomal large subunit assembly"/>
    <property type="evidence" value="ECO:0000316"/>
    <property type="project" value="SGD"/>
</dbReference>
<dbReference type="GO" id="GO:0006396">
    <property type="term" value="P:RNA processing"/>
    <property type="evidence" value="ECO:0000318"/>
    <property type="project" value="GO_Central"/>
</dbReference>
<dbReference type="GO" id="GO:0006364">
    <property type="term" value="P:rRNA processing"/>
    <property type="evidence" value="ECO:0000316"/>
    <property type="project" value="SGD"/>
</dbReference>
<dbReference type="CDD" id="cd06144">
    <property type="entry name" value="REX4_like"/>
    <property type="match status" value="1"/>
</dbReference>
<dbReference type="FunFam" id="3.30.420.10:FF:000007">
    <property type="entry name" value="Interferon-stimulated exonuclease gene 20"/>
    <property type="match status" value="1"/>
</dbReference>
<dbReference type="Gene3D" id="3.30.420.10">
    <property type="entry name" value="Ribonuclease H-like superfamily/Ribonuclease H"/>
    <property type="match status" value="1"/>
</dbReference>
<dbReference type="InterPro" id="IPR013520">
    <property type="entry name" value="Exonuclease_RNaseT/DNA_pol3"/>
</dbReference>
<dbReference type="InterPro" id="IPR037431">
    <property type="entry name" value="REX4_DEDDh_dom"/>
</dbReference>
<dbReference type="InterPro" id="IPR047021">
    <property type="entry name" value="REXO1/3/4-like"/>
</dbReference>
<dbReference type="InterPro" id="IPR012337">
    <property type="entry name" value="RNaseH-like_sf"/>
</dbReference>
<dbReference type="InterPro" id="IPR036397">
    <property type="entry name" value="RNaseH_sf"/>
</dbReference>
<dbReference type="PANTHER" id="PTHR12801:SF45">
    <property type="entry name" value="RNA EXONUCLEASE 4"/>
    <property type="match status" value="1"/>
</dbReference>
<dbReference type="PANTHER" id="PTHR12801">
    <property type="entry name" value="RNA EXONUCLEASE REXO1 / RECO3 FAMILY MEMBER-RELATED"/>
    <property type="match status" value="1"/>
</dbReference>
<dbReference type="Pfam" id="PF00929">
    <property type="entry name" value="RNase_T"/>
    <property type="match status" value="1"/>
</dbReference>
<dbReference type="SMART" id="SM00479">
    <property type="entry name" value="EXOIII"/>
    <property type="match status" value="1"/>
</dbReference>
<dbReference type="SUPFAM" id="SSF53098">
    <property type="entry name" value="Ribonuclease H-like"/>
    <property type="match status" value="1"/>
</dbReference>
<reference key="1">
    <citation type="journal article" date="1997" name="Nature">
        <title>The nucleotide sequence of Saccharomyces cerevisiae chromosome XV.</title>
        <authorList>
            <person name="Dujon B."/>
            <person name="Albermann K."/>
            <person name="Aldea M."/>
            <person name="Alexandraki D."/>
            <person name="Ansorge W."/>
            <person name="Arino J."/>
            <person name="Benes V."/>
            <person name="Bohn C."/>
            <person name="Bolotin-Fukuhara M."/>
            <person name="Bordonne R."/>
            <person name="Boyer J."/>
            <person name="Camasses A."/>
            <person name="Casamayor A."/>
            <person name="Casas C."/>
            <person name="Cheret G."/>
            <person name="Cziepluch C."/>
            <person name="Daignan-Fornier B."/>
            <person name="Dang V.-D."/>
            <person name="de Haan M."/>
            <person name="Delius H."/>
            <person name="Durand P."/>
            <person name="Fairhead C."/>
            <person name="Feldmann H."/>
            <person name="Gaillon L."/>
            <person name="Galisson F."/>
            <person name="Gamo F.-J."/>
            <person name="Gancedo C."/>
            <person name="Goffeau A."/>
            <person name="Goulding S.E."/>
            <person name="Grivell L.A."/>
            <person name="Habbig B."/>
            <person name="Hand N.J."/>
            <person name="Hani J."/>
            <person name="Hattenhorst U."/>
            <person name="Hebling U."/>
            <person name="Hernando Y."/>
            <person name="Herrero E."/>
            <person name="Heumann K."/>
            <person name="Hiesel R."/>
            <person name="Hilger F."/>
            <person name="Hofmann B."/>
            <person name="Hollenberg C.P."/>
            <person name="Hughes B."/>
            <person name="Jauniaux J.-C."/>
            <person name="Kalogeropoulos A."/>
            <person name="Katsoulou C."/>
            <person name="Kordes E."/>
            <person name="Lafuente M.J."/>
            <person name="Landt O."/>
            <person name="Louis E.J."/>
            <person name="Maarse A.C."/>
            <person name="Madania A."/>
            <person name="Mannhaupt G."/>
            <person name="Marck C."/>
            <person name="Martin R.P."/>
            <person name="Mewes H.-W."/>
            <person name="Michaux G."/>
            <person name="Paces V."/>
            <person name="Parle-McDermott A.G."/>
            <person name="Pearson B.M."/>
            <person name="Perrin A."/>
            <person name="Pettersson B."/>
            <person name="Poch O."/>
            <person name="Pohl T.M."/>
            <person name="Poirey R."/>
            <person name="Portetelle D."/>
            <person name="Pujol A."/>
            <person name="Purnelle B."/>
            <person name="Ramezani Rad M."/>
            <person name="Rechmann S."/>
            <person name="Schwager C."/>
            <person name="Schweizer M."/>
            <person name="Sor F."/>
            <person name="Sterky F."/>
            <person name="Tarassov I.A."/>
            <person name="Teodoru C."/>
            <person name="Tettelin H."/>
            <person name="Thierry A."/>
            <person name="Tobiasch E."/>
            <person name="Tzermia M."/>
            <person name="Uhlen M."/>
            <person name="Unseld M."/>
            <person name="Valens M."/>
            <person name="Vandenbol M."/>
            <person name="Vetter I."/>
            <person name="Vlcek C."/>
            <person name="Voet M."/>
            <person name="Volckaert G."/>
            <person name="Voss H."/>
            <person name="Wambutt R."/>
            <person name="Wedler H."/>
            <person name="Wiemann S."/>
            <person name="Winsor B."/>
            <person name="Wolfe K.H."/>
            <person name="Zollner A."/>
            <person name="Zumstein E."/>
            <person name="Kleine K."/>
        </authorList>
    </citation>
    <scope>NUCLEOTIDE SEQUENCE [LARGE SCALE GENOMIC DNA]</scope>
    <source>
        <strain>ATCC 204508 / S288c</strain>
    </source>
</reference>
<reference key="2">
    <citation type="journal article" date="2014" name="G3 (Bethesda)">
        <title>The reference genome sequence of Saccharomyces cerevisiae: Then and now.</title>
        <authorList>
            <person name="Engel S.R."/>
            <person name="Dietrich F.S."/>
            <person name="Fisk D.G."/>
            <person name="Binkley G."/>
            <person name="Balakrishnan R."/>
            <person name="Costanzo M.C."/>
            <person name="Dwight S.S."/>
            <person name="Hitz B.C."/>
            <person name="Karra K."/>
            <person name="Nash R.S."/>
            <person name="Weng S."/>
            <person name="Wong E.D."/>
            <person name="Lloyd P."/>
            <person name="Skrzypek M.S."/>
            <person name="Miyasato S.R."/>
            <person name="Simison M."/>
            <person name="Cherry J.M."/>
        </authorList>
    </citation>
    <scope>GENOME REANNOTATION</scope>
    <source>
        <strain>ATCC 204508 / S288c</strain>
    </source>
</reference>
<reference key="3">
    <citation type="journal article" date="2002" name="Nucleic Acids Res.">
        <title>Deletions in the S1 domain of Rrp5p cause processing at a novel site in ITS1 of yeast pre-rRNA that depends on Rex4p.</title>
        <authorList>
            <person name="Eppens N.A."/>
            <person name="Faber A.W."/>
            <person name="Rondaij M."/>
            <person name="Jahangir R.S."/>
            <person name="van Hemert S."/>
            <person name="Vos J.C."/>
            <person name="Venema J."/>
            <person name="Raue H.A."/>
        </authorList>
    </citation>
    <scope>FUNCTION</scope>
</reference>
<reference key="4">
    <citation type="journal article" date="2003" name="Nature">
        <title>Global analysis of protein localization in budding yeast.</title>
        <authorList>
            <person name="Huh W.-K."/>
            <person name="Falvo J.V."/>
            <person name="Gerke L.C."/>
            <person name="Carroll A.S."/>
            <person name="Howson R.W."/>
            <person name="Weissman J.S."/>
            <person name="O'Shea E.K."/>
        </authorList>
    </citation>
    <scope>SUBCELLULAR LOCATION [LARGE SCALE ANALYSIS]</scope>
</reference>
<reference key="5">
    <citation type="journal article" date="2003" name="Nature">
        <title>Global analysis of protein expression in yeast.</title>
        <authorList>
            <person name="Ghaemmaghami S."/>
            <person name="Huh W.-K."/>
            <person name="Bower K."/>
            <person name="Howson R.W."/>
            <person name="Belle A."/>
            <person name="Dephoure N."/>
            <person name="O'Shea E.K."/>
            <person name="Weissman J.S."/>
        </authorList>
    </citation>
    <scope>LEVEL OF PROTEIN EXPRESSION [LARGE SCALE ANALYSIS]</scope>
</reference>
<reference key="6">
    <citation type="journal article" date="2004" name="RNA">
        <title>The RNA catabolic enzymes Rex4p, Rnt1p, and Dbr1p show genetic interaction with trans-acting factors involved in processing of ITS1 in Saccharomyces cerevisiae pre-rRNA.</title>
        <authorList>
            <person name="Faber A.W."/>
            <person name="Vos J.C."/>
            <person name="Vos H.R."/>
            <person name="Ghazal G."/>
            <person name="Elela S.A."/>
            <person name="Raue H.A."/>
        </authorList>
    </citation>
    <scope>FUNCTION</scope>
</reference>
<evidence type="ECO:0000256" key="1">
    <source>
        <dbReference type="SAM" id="MobiDB-lite"/>
    </source>
</evidence>
<evidence type="ECO:0000269" key="2">
    <source>
    </source>
</evidence>
<evidence type="ECO:0000269" key="3">
    <source>
    </source>
</evidence>
<evidence type="ECO:0000269" key="4">
    <source>
    </source>
</evidence>
<evidence type="ECO:0000269" key="5">
    <source>
    </source>
</evidence>
<evidence type="ECO:0000305" key="6"/>
<protein>
    <recommendedName>
        <fullName>RNA exonuclease 4</fullName>
        <ecNumber>3.1.-.-</ecNumber>
    </recommendedName>
</protein>
<sequence>MALSSNWQALLASESNPTSNGKNKQSNRKIRNVKKVSKTVNVSSTTQYAPRKRKNGSKIMDMVYNMNKEISKHEKDKLEGKVFEFNPNKANTSTTIKEPVKVGISEDTRINSNKSKEIGKYIAMDCEFVGVGPEGKESALARISIVNYFGHVVLDEFVKPREKVVEWRTWVSGIKPEHMKNAITFKEAQKKTADILEGRILVGHALKHDLEALMLSHPKSLLRDTSRHLPFRKLYAKGKTPSLKKLTREVLKISIQEGEHSSVEDARATMLLYKKEKTEFEKIHRNTFN</sequence>
<proteinExistence type="evidence at protein level"/>
<comment type="function">
    <text evidence="2 5">Exoribonuclease involved in ribosome biosynthesis. Involved in the processing of ITS1, the internal transcribed spacer localized between the 18S and 5.8S rRNAs.</text>
</comment>
<comment type="subcellular location">
    <subcellularLocation>
        <location evidence="3">Nucleus</location>
    </subcellularLocation>
</comment>
<comment type="miscellaneous">
    <text evidence="4">Present with 4280 molecules/cell in log phase SD medium.</text>
</comment>
<comment type="similarity">
    <text evidence="6">Belongs to the REXO4 family.</text>
</comment>
<name>REXO4_YEAST</name>
<accession>Q08237</accession>
<accession>D6W1Y8</accession>
<organism>
    <name type="scientific">Saccharomyces cerevisiae (strain ATCC 204508 / S288c)</name>
    <name type="common">Baker's yeast</name>
    <dbReference type="NCBI Taxonomy" id="559292"/>
    <lineage>
        <taxon>Eukaryota</taxon>
        <taxon>Fungi</taxon>
        <taxon>Dikarya</taxon>
        <taxon>Ascomycota</taxon>
        <taxon>Saccharomycotina</taxon>
        <taxon>Saccharomycetes</taxon>
        <taxon>Saccharomycetales</taxon>
        <taxon>Saccharomycetaceae</taxon>
        <taxon>Saccharomyces</taxon>
    </lineage>
</organism>
<keyword id="KW-0269">Exonuclease</keyword>
<keyword id="KW-0378">Hydrolase</keyword>
<keyword id="KW-0540">Nuclease</keyword>
<keyword id="KW-0539">Nucleus</keyword>
<keyword id="KW-1185">Reference proteome</keyword>
<keyword id="KW-0698">rRNA processing</keyword>
<gene>
    <name type="primary">REX4</name>
    <name type="ordered locus">YOL080C</name>
</gene>
<feature type="chain" id="PRO_0000131702" description="RNA exonuclease 4">
    <location>
        <begin position="1"/>
        <end position="289"/>
    </location>
</feature>
<feature type="domain" description="Exonuclease">
    <location>
        <begin position="121"/>
        <end position="273"/>
    </location>
</feature>
<feature type="region of interest" description="Disordered" evidence="1">
    <location>
        <begin position="1"/>
        <end position="34"/>
    </location>
</feature>
<feature type="compositionally biased region" description="Polar residues" evidence="1">
    <location>
        <begin position="1"/>
        <end position="24"/>
    </location>
</feature>
<feature type="compositionally biased region" description="Basic residues" evidence="1">
    <location>
        <begin position="25"/>
        <end position="34"/>
    </location>
</feature>